<evidence type="ECO:0000255" key="1">
    <source>
        <dbReference type="HAMAP-Rule" id="MF_00093"/>
    </source>
</evidence>
<comment type="function">
    <text evidence="1">Peptide chain release factor 1 directs the termination of translation in response to the peptide chain termination codons UAG and UAA.</text>
</comment>
<comment type="subcellular location">
    <subcellularLocation>
        <location evidence="1">Cytoplasm</location>
    </subcellularLocation>
</comment>
<comment type="PTM">
    <text evidence="1">Methylated by PrmC. Methylation increases the termination efficiency of RF1.</text>
</comment>
<comment type="similarity">
    <text evidence="1">Belongs to the prokaryotic/mitochondrial release factor family.</text>
</comment>
<sequence length="357" mass="38831">MSAPTTAIDALLAEHADLERQLADPALHADAGKARKAGRRFAQLAPIVATYRKLEAARGDLEAARELGADDASFAAEVPELEATVDQLETQLSDLLAPRDPHDADDIVLEVKSGEGGEESALFAADLARMYIRYAERHGWSVTILDETTSDLGGYKDATLSIRSKGDSADGVWSRLKFEGGVHRVQRVPVTESQGRVHTSAAGVLVYPEPEEVEQVQIDESDLRIDVYRSSGKGGQGVNTTDSAVRITHLPTGIVVTCQNERSQLQNKARAMQVLAARLQSLAEEQASADASADRASQIRTVDRSERIRTYNFPENRIADHRINFKAHNLDQVLDGDLDPLFDALAAADKQARLQSS</sequence>
<feature type="chain" id="PRO_1000004916" description="Peptide chain release factor 1">
    <location>
        <begin position="1"/>
        <end position="357"/>
    </location>
</feature>
<feature type="modified residue" description="N5-methylglutamine" evidence="1">
    <location>
        <position position="236"/>
    </location>
</feature>
<name>RF1_MYCSK</name>
<proteinExistence type="inferred from homology"/>
<dbReference type="EMBL" id="CP000518">
    <property type="protein sequence ID" value="ABL93153.1"/>
    <property type="molecule type" value="Genomic_DNA"/>
</dbReference>
<dbReference type="SMR" id="A1UJZ5"/>
<dbReference type="STRING" id="189918.Mkms_3961"/>
<dbReference type="KEGG" id="mkm:Mkms_3961"/>
<dbReference type="HOGENOM" id="CLU_036856_0_6_11"/>
<dbReference type="OrthoDB" id="9806673at2"/>
<dbReference type="GO" id="GO:0005737">
    <property type="term" value="C:cytoplasm"/>
    <property type="evidence" value="ECO:0007669"/>
    <property type="project" value="UniProtKB-SubCell"/>
</dbReference>
<dbReference type="GO" id="GO:0016149">
    <property type="term" value="F:translation release factor activity, codon specific"/>
    <property type="evidence" value="ECO:0007669"/>
    <property type="project" value="UniProtKB-UniRule"/>
</dbReference>
<dbReference type="FunFam" id="3.30.160.20:FF:000004">
    <property type="entry name" value="Peptide chain release factor 1"/>
    <property type="match status" value="1"/>
</dbReference>
<dbReference type="Gene3D" id="3.30.160.20">
    <property type="match status" value="1"/>
</dbReference>
<dbReference type="Gene3D" id="3.30.70.1660">
    <property type="match status" value="1"/>
</dbReference>
<dbReference type="Gene3D" id="6.10.140.1950">
    <property type="match status" value="1"/>
</dbReference>
<dbReference type="HAMAP" id="MF_00093">
    <property type="entry name" value="Rel_fac_1"/>
    <property type="match status" value="1"/>
</dbReference>
<dbReference type="InterPro" id="IPR005139">
    <property type="entry name" value="PCRF"/>
</dbReference>
<dbReference type="InterPro" id="IPR000352">
    <property type="entry name" value="Pep_chain_release_fac_I"/>
</dbReference>
<dbReference type="InterPro" id="IPR045853">
    <property type="entry name" value="Pep_chain_release_fac_I_sf"/>
</dbReference>
<dbReference type="InterPro" id="IPR050057">
    <property type="entry name" value="Prokaryotic/Mito_RF"/>
</dbReference>
<dbReference type="InterPro" id="IPR004373">
    <property type="entry name" value="RF-1"/>
</dbReference>
<dbReference type="NCBIfam" id="TIGR00019">
    <property type="entry name" value="prfA"/>
    <property type="match status" value="1"/>
</dbReference>
<dbReference type="NCBIfam" id="NF001859">
    <property type="entry name" value="PRK00591.1"/>
    <property type="match status" value="1"/>
</dbReference>
<dbReference type="PANTHER" id="PTHR43804">
    <property type="entry name" value="LD18447P"/>
    <property type="match status" value="1"/>
</dbReference>
<dbReference type="PANTHER" id="PTHR43804:SF7">
    <property type="entry name" value="LD18447P"/>
    <property type="match status" value="1"/>
</dbReference>
<dbReference type="Pfam" id="PF03462">
    <property type="entry name" value="PCRF"/>
    <property type="match status" value="1"/>
</dbReference>
<dbReference type="Pfam" id="PF00472">
    <property type="entry name" value="RF-1"/>
    <property type="match status" value="1"/>
</dbReference>
<dbReference type="SMART" id="SM00937">
    <property type="entry name" value="PCRF"/>
    <property type="match status" value="1"/>
</dbReference>
<dbReference type="SUPFAM" id="SSF75620">
    <property type="entry name" value="Release factor"/>
    <property type="match status" value="1"/>
</dbReference>
<dbReference type="PROSITE" id="PS00745">
    <property type="entry name" value="RF_PROK_I"/>
    <property type="match status" value="1"/>
</dbReference>
<gene>
    <name evidence="1" type="primary">prfA</name>
    <name type="ordered locus">Mkms_3961</name>
</gene>
<organism>
    <name type="scientific">Mycobacterium sp. (strain KMS)</name>
    <dbReference type="NCBI Taxonomy" id="189918"/>
    <lineage>
        <taxon>Bacteria</taxon>
        <taxon>Bacillati</taxon>
        <taxon>Actinomycetota</taxon>
        <taxon>Actinomycetes</taxon>
        <taxon>Mycobacteriales</taxon>
        <taxon>Mycobacteriaceae</taxon>
        <taxon>Mycobacterium</taxon>
    </lineage>
</organism>
<reference key="1">
    <citation type="submission" date="2006-12" db="EMBL/GenBank/DDBJ databases">
        <title>Complete sequence of chromosome of Mycobacterium sp. KMS.</title>
        <authorList>
            <consortium name="US DOE Joint Genome Institute"/>
            <person name="Copeland A."/>
            <person name="Lucas S."/>
            <person name="Lapidus A."/>
            <person name="Barry K."/>
            <person name="Detter J.C."/>
            <person name="Glavina del Rio T."/>
            <person name="Hammon N."/>
            <person name="Israni S."/>
            <person name="Dalin E."/>
            <person name="Tice H."/>
            <person name="Pitluck S."/>
            <person name="Kiss H."/>
            <person name="Brettin T."/>
            <person name="Bruce D."/>
            <person name="Han C."/>
            <person name="Tapia R."/>
            <person name="Gilna P."/>
            <person name="Schmutz J."/>
            <person name="Larimer F."/>
            <person name="Land M."/>
            <person name="Hauser L."/>
            <person name="Kyrpides N."/>
            <person name="Mikhailova N."/>
            <person name="Miller C.D."/>
            <person name="Richardson P."/>
        </authorList>
    </citation>
    <scope>NUCLEOTIDE SEQUENCE [LARGE SCALE GENOMIC DNA]</scope>
    <source>
        <strain>KMS</strain>
    </source>
</reference>
<keyword id="KW-0963">Cytoplasm</keyword>
<keyword id="KW-0488">Methylation</keyword>
<keyword id="KW-0648">Protein biosynthesis</keyword>
<accession>A1UJZ5</accession>
<protein>
    <recommendedName>
        <fullName evidence="1">Peptide chain release factor 1</fullName>
        <shortName evidence="1">RF-1</shortName>
    </recommendedName>
</protein>